<dbReference type="EC" id="4.2.1.11" evidence="1"/>
<dbReference type="EMBL" id="AP009552">
    <property type="protein sequence ID" value="BAG03331.1"/>
    <property type="molecule type" value="Genomic_DNA"/>
</dbReference>
<dbReference type="RefSeq" id="WP_012266379.1">
    <property type="nucleotide sequence ID" value="NC_010296.1"/>
</dbReference>
<dbReference type="SMR" id="B0JMP6"/>
<dbReference type="STRING" id="449447.MAE_35090"/>
<dbReference type="PaxDb" id="449447-MAE_35090"/>
<dbReference type="EnsemblBacteria" id="BAG03331">
    <property type="protein sequence ID" value="BAG03331"/>
    <property type="gene ID" value="MAE_35090"/>
</dbReference>
<dbReference type="KEGG" id="mar:MAE_35090"/>
<dbReference type="PATRIC" id="fig|449447.4.peg.3174"/>
<dbReference type="eggNOG" id="COG0148">
    <property type="taxonomic scope" value="Bacteria"/>
</dbReference>
<dbReference type="HOGENOM" id="CLU_031223_2_1_3"/>
<dbReference type="BioCyc" id="MAER449447:MAE_RS15185-MONOMER"/>
<dbReference type="UniPathway" id="UPA00109">
    <property type="reaction ID" value="UER00187"/>
</dbReference>
<dbReference type="Proteomes" id="UP000001510">
    <property type="component" value="Chromosome"/>
</dbReference>
<dbReference type="GO" id="GO:0009986">
    <property type="term" value="C:cell surface"/>
    <property type="evidence" value="ECO:0007669"/>
    <property type="project" value="UniProtKB-SubCell"/>
</dbReference>
<dbReference type="GO" id="GO:0005576">
    <property type="term" value="C:extracellular region"/>
    <property type="evidence" value="ECO:0007669"/>
    <property type="project" value="UniProtKB-SubCell"/>
</dbReference>
<dbReference type="GO" id="GO:0000015">
    <property type="term" value="C:phosphopyruvate hydratase complex"/>
    <property type="evidence" value="ECO:0007669"/>
    <property type="project" value="InterPro"/>
</dbReference>
<dbReference type="GO" id="GO:0000287">
    <property type="term" value="F:magnesium ion binding"/>
    <property type="evidence" value="ECO:0007669"/>
    <property type="project" value="UniProtKB-UniRule"/>
</dbReference>
<dbReference type="GO" id="GO:0004634">
    <property type="term" value="F:phosphopyruvate hydratase activity"/>
    <property type="evidence" value="ECO:0007669"/>
    <property type="project" value="UniProtKB-UniRule"/>
</dbReference>
<dbReference type="GO" id="GO:0006096">
    <property type="term" value="P:glycolytic process"/>
    <property type="evidence" value="ECO:0007669"/>
    <property type="project" value="UniProtKB-UniRule"/>
</dbReference>
<dbReference type="CDD" id="cd03313">
    <property type="entry name" value="enolase"/>
    <property type="match status" value="1"/>
</dbReference>
<dbReference type="FunFam" id="3.20.20.120:FF:000001">
    <property type="entry name" value="Enolase"/>
    <property type="match status" value="1"/>
</dbReference>
<dbReference type="Gene3D" id="3.20.20.120">
    <property type="entry name" value="Enolase-like C-terminal domain"/>
    <property type="match status" value="1"/>
</dbReference>
<dbReference type="Gene3D" id="3.30.390.10">
    <property type="entry name" value="Enolase-like, N-terminal domain"/>
    <property type="match status" value="1"/>
</dbReference>
<dbReference type="HAMAP" id="MF_00318">
    <property type="entry name" value="Enolase"/>
    <property type="match status" value="1"/>
</dbReference>
<dbReference type="InterPro" id="IPR000941">
    <property type="entry name" value="Enolase"/>
</dbReference>
<dbReference type="InterPro" id="IPR036849">
    <property type="entry name" value="Enolase-like_C_sf"/>
</dbReference>
<dbReference type="InterPro" id="IPR029017">
    <property type="entry name" value="Enolase-like_N"/>
</dbReference>
<dbReference type="InterPro" id="IPR020810">
    <property type="entry name" value="Enolase_C"/>
</dbReference>
<dbReference type="InterPro" id="IPR020809">
    <property type="entry name" value="Enolase_CS"/>
</dbReference>
<dbReference type="InterPro" id="IPR020811">
    <property type="entry name" value="Enolase_N"/>
</dbReference>
<dbReference type="NCBIfam" id="TIGR01060">
    <property type="entry name" value="eno"/>
    <property type="match status" value="1"/>
</dbReference>
<dbReference type="PANTHER" id="PTHR11902">
    <property type="entry name" value="ENOLASE"/>
    <property type="match status" value="1"/>
</dbReference>
<dbReference type="PANTHER" id="PTHR11902:SF1">
    <property type="entry name" value="ENOLASE"/>
    <property type="match status" value="1"/>
</dbReference>
<dbReference type="Pfam" id="PF00113">
    <property type="entry name" value="Enolase_C"/>
    <property type="match status" value="1"/>
</dbReference>
<dbReference type="Pfam" id="PF03952">
    <property type="entry name" value="Enolase_N"/>
    <property type="match status" value="1"/>
</dbReference>
<dbReference type="PIRSF" id="PIRSF001400">
    <property type="entry name" value="Enolase"/>
    <property type="match status" value="1"/>
</dbReference>
<dbReference type="PRINTS" id="PR00148">
    <property type="entry name" value="ENOLASE"/>
</dbReference>
<dbReference type="SFLD" id="SFLDS00001">
    <property type="entry name" value="Enolase"/>
    <property type="match status" value="1"/>
</dbReference>
<dbReference type="SFLD" id="SFLDF00002">
    <property type="entry name" value="enolase"/>
    <property type="match status" value="1"/>
</dbReference>
<dbReference type="SMART" id="SM01192">
    <property type="entry name" value="Enolase_C"/>
    <property type="match status" value="1"/>
</dbReference>
<dbReference type="SMART" id="SM01193">
    <property type="entry name" value="Enolase_N"/>
    <property type="match status" value="1"/>
</dbReference>
<dbReference type="SUPFAM" id="SSF51604">
    <property type="entry name" value="Enolase C-terminal domain-like"/>
    <property type="match status" value="1"/>
</dbReference>
<dbReference type="SUPFAM" id="SSF54826">
    <property type="entry name" value="Enolase N-terminal domain-like"/>
    <property type="match status" value="1"/>
</dbReference>
<dbReference type="PROSITE" id="PS00164">
    <property type="entry name" value="ENOLASE"/>
    <property type="match status" value="1"/>
</dbReference>
<comment type="function">
    <text evidence="1">Catalyzes the reversible conversion of 2-phosphoglycerate (2-PG) into phosphoenolpyruvate (PEP). It is essential for the degradation of carbohydrates via glycolysis.</text>
</comment>
<comment type="catalytic activity">
    <reaction evidence="1">
        <text>(2R)-2-phosphoglycerate = phosphoenolpyruvate + H2O</text>
        <dbReference type="Rhea" id="RHEA:10164"/>
        <dbReference type="ChEBI" id="CHEBI:15377"/>
        <dbReference type="ChEBI" id="CHEBI:58289"/>
        <dbReference type="ChEBI" id="CHEBI:58702"/>
        <dbReference type="EC" id="4.2.1.11"/>
    </reaction>
</comment>
<comment type="cofactor">
    <cofactor evidence="1">
        <name>Mg(2+)</name>
        <dbReference type="ChEBI" id="CHEBI:18420"/>
    </cofactor>
    <text evidence="1">Binds a second Mg(2+) ion via substrate during catalysis.</text>
</comment>
<comment type="pathway">
    <text evidence="1">Carbohydrate degradation; glycolysis; pyruvate from D-glyceraldehyde 3-phosphate: step 4/5.</text>
</comment>
<comment type="subcellular location">
    <subcellularLocation>
        <location evidence="1">Cytoplasm</location>
    </subcellularLocation>
    <subcellularLocation>
        <location evidence="1">Secreted</location>
    </subcellularLocation>
    <subcellularLocation>
        <location evidence="1">Cell surface</location>
    </subcellularLocation>
    <text evidence="1">Fractions of enolase are present in both the cytoplasm and on the cell surface.</text>
</comment>
<comment type="similarity">
    <text evidence="1">Belongs to the enolase family.</text>
</comment>
<name>ENO_MICAN</name>
<sequence>MLDKIEVPIEAIAAREILDSRGRPTIEAEVLLESGALGLAQVPSGASTGSFEAHELRDDDPQRYGGKGVLKAVRNVHEKIVPVLEGMNAFDQASIDLAMIDRDGTANKRELGANAILAVSLATAKAAAADLGLPLYRYLGGPMANVLPVPMMNVINGGSHADNNVDFQEFMIFPIGADSFKEGLRWGAEVFAALGKALHERKLLTGVGDEGGYAPNLASNQEALDILIESIERAGYKPGSQVALAMDVAASEFYRDGQYIYDGSAHSPAEMVDFLASLVERYPIISIEDGLHEEDWDNWKLLTDKLGARIQLVGDDLMVTNPIRLQKAIDLGIANSILIKLNQIGSLTETLQTIALATRHGYRSVISHRSGETEDTTIADLAVATNAGQIKTGSLSRSERVAKYNRLLRIEEELGDRAVYAPKVGLGPKFLA</sequence>
<organism>
    <name type="scientific">Microcystis aeruginosa (strain NIES-843 / IAM M-2473)</name>
    <dbReference type="NCBI Taxonomy" id="449447"/>
    <lineage>
        <taxon>Bacteria</taxon>
        <taxon>Bacillati</taxon>
        <taxon>Cyanobacteriota</taxon>
        <taxon>Cyanophyceae</taxon>
        <taxon>Oscillatoriophycideae</taxon>
        <taxon>Chroococcales</taxon>
        <taxon>Microcystaceae</taxon>
        <taxon>Microcystis</taxon>
    </lineage>
</organism>
<reference key="1">
    <citation type="journal article" date="2007" name="DNA Res.">
        <title>Complete genomic structure of the bloom-forming toxic cyanobacterium Microcystis aeruginosa NIES-843.</title>
        <authorList>
            <person name="Kaneko T."/>
            <person name="Nakajima N."/>
            <person name="Okamoto S."/>
            <person name="Suzuki I."/>
            <person name="Tanabe Y."/>
            <person name="Tamaoki M."/>
            <person name="Nakamura Y."/>
            <person name="Kasai F."/>
            <person name="Watanabe A."/>
            <person name="Kawashima K."/>
            <person name="Kishida Y."/>
            <person name="Ono A."/>
            <person name="Shimizu Y."/>
            <person name="Takahashi C."/>
            <person name="Minami C."/>
            <person name="Fujishiro T."/>
            <person name="Kohara M."/>
            <person name="Katoh M."/>
            <person name="Nakazaki N."/>
            <person name="Nakayama S."/>
            <person name="Yamada M."/>
            <person name="Tabata S."/>
            <person name="Watanabe M.M."/>
        </authorList>
    </citation>
    <scope>NUCLEOTIDE SEQUENCE [LARGE SCALE GENOMIC DNA]</scope>
    <source>
        <strain>NIES-843 / IAM M-247</strain>
    </source>
</reference>
<proteinExistence type="inferred from homology"/>
<protein>
    <recommendedName>
        <fullName evidence="1">Enolase</fullName>
        <ecNumber evidence="1">4.2.1.11</ecNumber>
    </recommendedName>
    <alternativeName>
        <fullName evidence="1">2-phospho-D-glycerate hydro-lyase</fullName>
    </alternativeName>
    <alternativeName>
        <fullName evidence="1">2-phosphoglycerate dehydratase</fullName>
    </alternativeName>
</protein>
<accession>B0JMP6</accession>
<feature type="chain" id="PRO_0000337616" description="Enolase">
    <location>
        <begin position="1"/>
        <end position="432"/>
    </location>
</feature>
<feature type="active site" description="Proton donor" evidence="1">
    <location>
        <position position="210"/>
    </location>
</feature>
<feature type="active site" description="Proton acceptor" evidence="1">
    <location>
        <position position="340"/>
    </location>
</feature>
<feature type="binding site" evidence="1">
    <location>
        <position position="168"/>
    </location>
    <ligand>
        <name>(2R)-2-phosphoglycerate</name>
        <dbReference type="ChEBI" id="CHEBI:58289"/>
    </ligand>
</feature>
<feature type="binding site" evidence="1">
    <location>
        <position position="247"/>
    </location>
    <ligand>
        <name>Mg(2+)</name>
        <dbReference type="ChEBI" id="CHEBI:18420"/>
    </ligand>
</feature>
<feature type="binding site" evidence="1">
    <location>
        <position position="288"/>
    </location>
    <ligand>
        <name>Mg(2+)</name>
        <dbReference type="ChEBI" id="CHEBI:18420"/>
    </ligand>
</feature>
<feature type="binding site" evidence="1">
    <location>
        <position position="315"/>
    </location>
    <ligand>
        <name>Mg(2+)</name>
        <dbReference type="ChEBI" id="CHEBI:18420"/>
    </ligand>
</feature>
<feature type="binding site" evidence="1">
    <location>
        <position position="340"/>
    </location>
    <ligand>
        <name>(2R)-2-phosphoglycerate</name>
        <dbReference type="ChEBI" id="CHEBI:58289"/>
    </ligand>
</feature>
<feature type="binding site" evidence="1">
    <location>
        <position position="369"/>
    </location>
    <ligand>
        <name>(2R)-2-phosphoglycerate</name>
        <dbReference type="ChEBI" id="CHEBI:58289"/>
    </ligand>
</feature>
<feature type="binding site" evidence="1">
    <location>
        <position position="370"/>
    </location>
    <ligand>
        <name>(2R)-2-phosphoglycerate</name>
        <dbReference type="ChEBI" id="CHEBI:58289"/>
    </ligand>
</feature>
<feature type="binding site" evidence="1">
    <location>
        <position position="391"/>
    </location>
    <ligand>
        <name>(2R)-2-phosphoglycerate</name>
        <dbReference type="ChEBI" id="CHEBI:58289"/>
    </ligand>
</feature>
<keyword id="KW-0963">Cytoplasm</keyword>
<keyword id="KW-0324">Glycolysis</keyword>
<keyword id="KW-0456">Lyase</keyword>
<keyword id="KW-0460">Magnesium</keyword>
<keyword id="KW-0479">Metal-binding</keyword>
<keyword id="KW-0964">Secreted</keyword>
<gene>
    <name evidence="1" type="primary">eno</name>
    <name type="ordered locus">MAE_35090</name>
</gene>
<evidence type="ECO:0000255" key="1">
    <source>
        <dbReference type="HAMAP-Rule" id="MF_00318"/>
    </source>
</evidence>